<organism>
    <name type="scientific">Pelotomaculum thermopropionicum (strain DSM 13744 / JCM 10971 / SI)</name>
    <dbReference type="NCBI Taxonomy" id="370438"/>
    <lineage>
        <taxon>Bacteria</taxon>
        <taxon>Bacillati</taxon>
        <taxon>Bacillota</taxon>
        <taxon>Clostridia</taxon>
        <taxon>Eubacteriales</taxon>
        <taxon>Desulfotomaculaceae</taxon>
        <taxon>Pelotomaculum</taxon>
    </lineage>
</organism>
<keyword id="KW-0342">GTP-binding</keyword>
<keyword id="KW-0547">Nucleotide-binding</keyword>
<keyword id="KW-1185">Reference proteome</keyword>
<keyword id="KW-0677">Repeat</keyword>
<keyword id="KW-0690">Ribosome biogenesis</keyword>
<comment type="function">
    <text evidence="1">GTPase that plays an essential role in the late steps of ribosome biogenesis.</text>
</comment>
<comment type="subunit">
    <text evidence="1">Associates with the 50S ribosomal subunit.</text>
</comment>
<comment type="similarity">
    <text evidence="1">Belongs to the TRAFAC class TrmE-Era-EngA-EngB-Septin-like GTPase superfamily. EngA (Der) GTPase family.</text>
</comment>
<reference key="1">
    <citation type="journal article" date="2008" name="Genome Res.">
        <title>The genome of Pelotomaculum thermopropionicum reveals niche-associated evolution in anaerobic microbiota.</title>
        <authorList>
            <person name="Kosaka T."/>
            <person name="Kato S."/>
            <person name="Shimoyama T."/>
            <person name="Ishii S."/>
            <person name="Abe T."/>
            <person name="Watanabe K."/>
        </authorList>
    </citation>
    <scope>NUCLEOTIDE SEQUENCE [LARGE SCALE GENOMIC DNA]</scope>
    <source>
        <strain>DSM 13744 / JCM 10971 / SI</strain>
    </source>
</reference>
<dbReference type="EMBL" id="AP009389">
    <property type="protein sequence ID" value="BAF59790.1"/>
    <property type="molecule type" value="Genomic_DNA"/>
</dbReference>
<dbReference type="SMR" id="A5D1U6"/>
<dbReference type="STRING" id="370438.PTH_1609"/>
<dbReference type="KEGG" id="pth:PTH_1609"/>
<dbReference type="eggNOG" id="COG1160">
    <property type="taxonomic scope" value="Bacteria"/>
</dbReference>
<dbReference type="HOGENOM" id="CLU_016077_6_2_9"/>
<dbReference type="Proteomes" id="UP000006556">
    <property type="component" value="Chromosome"/>
</dbReference>
<dbReference type="GO" id="GO:0016887">
    <property type="term" value="F:ATP hydrolysis activity"/>
    <property type="evidence" value="ECO:0007669"/>
    <property type="project" value="InterPro"/>
</dbReference>
<dbReference type="GO" id="GO:0005525">
    <property type="term" value="F:GTP binding"/>
    <property type="evidence" value="ECO:0007669"/>
    <property type="project" value="UniProtKB-UniRule"/>
</dbReference>
<dbReference type="GO" id="GO:0043022">
    <property type="term" value="F:ribosome binding"/>
    <property type="evidence" value="ECO:0007669"/>
    <property type="project" value="TreeGrafter"/>
</dbReference>
<dbReference type="GO" id="GO:0042254">
    <property type="term" value="P:ribosome biogenesis"/>
    <property type="evidence" value="ECO:0007669"/>
    <property type="project" value="UniProtKB-KW"/>
</dbReference>
<dbReference type="CDD" id="cd01894">
    <property type="entry name" value="EngA1"/>
    <property type="match status" value="1"/>
</dbReference>
<dbReference type="CDD" id="cd01895">
    <property type="entry name" value="EngA2"/>
    <property type="match status" value="1"/>
</dbReference>
<dbReference type="FunFam" id="3.30.300.20:FF:000004">
    <property type="entry name" value="GTPase Der"/>
    <property type="match status" value="1"/>
</dbReference>
<dbReference type="FunFam" id="3.40.50.300:FF:000040">
    <property type="entry name" value="GTPase Der"/>
    <property type="match status" value="1"/>
</dbReference>
<dbReference type="FunFam" id="3.40.50.300:FF:000057">
    <property type="entry name" value="GTPase Der"/>
    <property type="match status" value="1"/>
</dbReference>
<dbReference type="Gene3D" id="3.30.300.20">
    <property type="match status" value="1"/>
</dbReference>
<dbReference type="Gene3D" id="3.40.50.300">
    <property type="entry name" value="P-loop containing nucleotide triphosphate hydrolases"/>
    <property type="match status" value="2"/>
</dbReference>
<dbReference type="HAMAP" id="MF_00195">
    <property type="entry name" value="GTPase_Der"/>
    <property type="match status" value="1"/>
</dbReference>
<dbReference type="InterPro" id="IPR003593">
    <property type="entry name" value="AAA+_ATPase"/>
</dbReference>
<dbReference type="InterPro" id="IPR031166">
    <property type="entry name" value="G_ENGA"/>
</dbReference>
<dbReference type="InterPro" id="IPR006073">
    <property type="entry name" value="GTP-bd"/>
</dbReference>
<dbReference type="InterPro" id="IPR016484">
    <property type="entry name" value="GTPase_Der"/>
</dbReference>
<dbReference type="InterPro" id="IPR032859">
    <property type="entry name" value="KH_dom-like"/>
</dbReference>
<dbReference type="InterPro" id="IPR015946">
    <property type="entry name" value="KH_dom-like_a/b"/>
</dbReference>
<dbReference type="InterPro" id="IPR027417">
    <property type="entry name" value="P-loop_NTPase"/>
</dbReference>
<dbReference type="InterPro" id="IPR005225">
    <property type="entry name" value="Small_GTP-bd"/>
</dbReference>
<dbReference type="NCBIfam" id="TIGR03594">
    <property type="entry name" value="GTPase_EngA"/>
    <property type="match status" value="1"/>
</dbReference>
<dbReference type="NCBIfam" id="TIGR00231">
    <property type="entry name" value="small_GTP"/>
    <property type="match status" value="2"/>
</dbReference>
<dbReference type="PANTHER" id="PTHR43834">
    <property type="entry name" value="GTPASE DER"/>
    <property type="match status" value="1"/>
</dbReference>
<dbReference type="PANTHER" id="PTHR43834:SF6">
    <property type="entry name" value="GTPASE DER"/>
    <property type="match status" value="1"/>
</dbReference>
<dbReference type="Pfam" id="PF14714">
    <property type="entry name" value="KH_dom-like"/>
    <property type="match status" value="1"/>
</dbReference>
<dbReference type="Pfam" id="PF01926">
    <property type="entry name" value="MMR_HSR1"/>
    <property type="match status" value="2"/>
</dbReference>
<dbReference type="PIRSF" id="PIRSF006485">
    <property type="entry name" value="GTP-binding_EngA"/>
    <property type="match status" value="1"/>
</dbReference>
<dbReference type="PRINTS" id="PR00326">
    <property type="entry name" value="GTP1OBG"/>
</dbReference>
<dbReference type="SMART" id="SM00382">
    <property type="entry name" value="AAA"/>
    <property type="match status" value="2"/>
</dbReference>
<dbReference type="SUPFAM" id="SSF52540">
    <property type="entry name" value="P-loop containing nucleoside triphosphate hydrolases"/>
    <property type="match status" value="2"/>
</dbReference>
<dbReference type="PROSITE" id="PS51712">
    <property type="entry name" value="G_ENGA"/>
    <property type="match status" value="2"/>
</dbReference>
<accession>A5D1U6</accession>
<evidence type="ECO:0000255" key="1">
    <source>
        <dbReference type="HAMAP-Rule" id="MF_00195"/>
    </source>
</evidence>
<name>DER_PELTS</name>
<gene>
    <name evidence="1" type="primary">der</name>
    <name type="synonym">engA</name>
    <name type="ordered locus">PTH_1609</name>
</gene>
<protein>
    <recommendedName>
        <fullName evidence="1">GTPase Der</fullName>
    </recommendedName>
    <alternativeName>
        <fullName evidence="1">GTP-binding protein EngA</fullName>
    </alternativeName>
</protein>
<sequence length="440" mass="48744">MPKPVVAIVGRPNVGKSTLFNRIVGNRVAIVEGEPGVTRDRLYQDAEWSGRSFTLVDTGGLDFKESDEIIQGVRRQAEIAIREADAVLLVVDAKAGLNPGDEEVASIIRRAEKPALLVANKVEKFDSLEQIYDFYRLGLGDPLPVSAAEGLNTGDLLDRLVEMLPPEKEDEYPPEAIKIAVIGRPNVGKSSLVNLILGEERVIVSNVPGTTRDAIDTPFEANGRHYVIIDTAGMRRKSRIDRPTEKYGVIRALRAIDRSDVVLVVLDAVEGVTDQDKRIAGYAHEAGKASVIVVNKWDLVEKDGHTMNRYTEKIREELAFMHYSPLLFTSAATGKRVGKIMELVDMVAGRHSMRISTPGLNALIREAVLRTPPPSDKGRRLKITYAVQGGIKPPKFVLFVNAPDLMHFSYLRYLENQIRAAFGFEGTPIRFVLRKKTKEA</sequence>
<feature type="chain" id="PRO_1000077664" description="GTPase Der">
    <location>
        <begin position="1"/>
        <end position="440"/>
    </location>
</feature>
<feature type="domain" description="EngA-type G 1">
    <location>
        <begin position="4"/>
        <end position="168"/>
    </location>
</feature>
<feature type="domain" description="EngA-type G 2">
    <location>
        <begin position="177"/>
        <end position="352"/>
    </location>
</feature>
<feature type="domain" description="KH-like" evidence="1">
    <location>
        <begin position="353"/>
        <end position="437"/>
    </location>
</feature>
<feature type="binding site" evidence="1">
    <location>
        <begin position="10"/>
        <end position="17"/>
    </location>
    <ligand>
        <name>GTP</name>
        <dbReference type="ChEBI" id="CHEBI:37565"/>
        <label>1</label>
    </ligand>
</feature>
<feature type="binding site" evidence="1">
    <location>
        <begin position="57"/>
        <end position="61"/>
    </location>
    <ligand>
        <name>GTP</name>
        <dbReference type="ChEBI" id="CHEBI:37565"/>
        <label>1</label>
    </ligand>
</feature>
<feature type="binding site" evidence="1">
    <location>
        <begin position="120"/>
        <end position="123"/>
    </location>
    <ligand>
        <name>GTP</name>
        <dbReference type="ChEBI" id="CHEBI:37565"/>
        <label>1</label>
    </ligand>
</feature>
<feature type="binding site" evidence="1">
    <location>
        <begin position="183"/>
        <end position="190"/>
    </location>
    <ligand>
        <name>GTP</name>
        <dbReference type="ChEBI" id="CHEBI:37565"/>
        <label>2</label>
    </ligand>
</feature>
<feature type="binding site" evidence="1">
    <location>
        <begin position="230"/>
        <end position="234"/>
    </location>
    <ligand>
        <name>GTP</name>
        <dbReference type="ChEBI" id="CHEBI:37565"/>
        <label>2</label>
    </ligand>
</feature>
<feature type="binding site" evidence="1">
    <location>
        <begin position="295"/>
        <end position="298"/>
    </location>
    <ligand>
        <name>GTP</name>
        <dbReference type="ChEBI" id="CHEBI:37565"/>
        <label>2</label>
    </ligand>
</feature>
<proteinExistence type="inferred from homology"/>